<evidence type="ECO:0000305" key="1"/>
<evidence type="ECO:0000305" key="2">
    <source>
    </source>
</evidence>
<reference key="1">
    <citation type="journal article" date="1997" name="Nature">
        <title>The nucleotide sequence of Saccharomyces cerevisiae chromosome IX.</title>
        <authorList>
            <person name="Churcher C.M."/>
            <person name="Bowman S."/>
            <person name="Badcock K."/>
            <person name="Bankier A.T."/>
            <person name="Brown D."/>
            <person name="Chillingworth T."/>
            <person name="Connor R."/>
            <person name="Devlin K."/>
            <person name="Gentles S."/>
            <person name="Hamlin N."/>
            <person name="Harris D.E."/>
            <person name="Horsnell T."/>
            <person name="Hunt S."/>
            <person name="Jagels K."/>
            <person name="Jones M."/>
            <person name="Lye G."/>
            <person name="Moule S."/>
            <person name="Odell C."/>
            <person name="Pearson D."/>
            <person name="Rajandream M.A."/>
            <person name="Rice P."/>
            <person name="Rowley N."/>
            <person name="Skelton J."/>
            <person name="Smith V."/>
            <person name="Walsh S.V."/>
            <person name="Whitehead S."/>
            <person name="Barrell B.G."/>
        </authorList>
    </citation>
    <scope>NUCLEOTIDE SEQUENCE [LARGE SCALE GENOMIC DNA]</scope>
    <source>
        <strain>ATCC 204508 / S288c</strain>
    </source>
</reference>
<reference key="2">
    <citation type="journal article" date="2014" name="G3 (Bethesda)">
        <title>The reference genome sequence of Saccharomyces cerevisiae: Then and now.</title>
        <authorList>
            <person name="Engel S.R."/>
            <person name="Dietrich F.S."/>
            <person name="Fisk D.G."/>
            <person name="Binkley G."/>
            <person name="Balakrishnan R."/>
            <person name="Costanzo M.C."/>
            <person name="Dwight S.S."/>
            <person name="Hitz B.C."/>
            <person name="Karra K."/>
            <person name="Nash R.S."/>
            <person name="Weng S."/>
            <person name="Wong E.D."/>
            <person name="Lloyd P."/>
            <person name="Skrzypek M.S."/>
            <person name="Miyasato S.R."/>
            <person name="Simison M."/>
            <person name="Cherry J.M."/>
        </authorList>
    </citation>
    <scope>GENOME REANNOTATION</scope>
    <source>
        <strain>ATCC 204508 / S288c</strain>
    </source>
</reference>
<proteinExistence type="uncertain"/>
<sequence>MKMFLFLNESYIFDRLRMWSIVLWHSCVFVCAECENANYRGAEVP</sequence>
<feature type="chain" id="PRO_0000202949" description="Putative UPF0377 protein YIL175W">
    <location>
        <begin position="1"/>
        <end position="45"/>
    </location>
</feature>
<dbReference type="EMBL" id="Z46921">
    <property type="status" value="NOT_ANNOTATED_CDS"/>
    <property type="molecule type" value="Genomic_DNA"/>
</dbReference>
<dbReference type="PIR" id="S50352">
    <property type="entry name" value="S50352"/>
</dbReference>
<dbReference type="STRING" id="4932.YJL222W-B"/>
<dbReference type="PaxDb" id="4932-YJL222W-B"/>
<dbReference type="EnsemblFungi" id="YJL222W-B_mRNA">
    <property type="protein sequence ID" value="YJL222W-B"/>
    <property type="gene ID" value="YJL222W-B"/>
</dbReference>
<dbReference type="AGR" id="SGD:S000001437"/>
<dbReference type="SGD" id="S000001437">
    <property type="gene designation" value="YIL175W"/>
</dbReference>
<dbReference type="HOGENOM" id="CLU_3207946_0_0_1"/>
<organism>
    <name type="scientific">Saccharomyces cerevisiae (strain ATCC 204508 / S288c)</name>
    <name type="common">Baker's yeast</name>
    <dbReference type="NCBI Taxonomy" id="559292"/>
    <lineage>
        <taxon>Eukaryota</taxon>
        <taxon>Fungi</taxon>
        <taxon>Dikarya</taxon>
        <taxon>Ascomycota</taxon>
        <taxon>Saccharomycotina</taxon>
        <taxon>Saccharomycetes</taxon>
        <taxon>Saccharomycetales</taxon>
        <taxon>Saccharomycetaceae</taxon>
        <taxon>Saccharomyces</taxon>
    </lineage>
</organism>
<comment type="similarity">
    <text evidence="1">Belongs to the UPF0377 family.</text>
</comment>
<comment type="caution">
    <text evidence="2">Product of a dubious gene prediction unlikely to encode a functional protein. Because of that it is not part of the S.cerevisiae S288c complete/reference proteome set.</text>
</comment>
<protein>
    <recommendedName>
        <fullName>Putative UPF0377 protein YIL175W</fullName>
    </recommendedName>
</protein>
<name>YIR5_YEAST</name>
<gene>
    <name type="ordered locus">YIL175W</name>
</gene>
<accession>P0CL23</accession>
<accession>P40436</accession>
<accession>Q8TGJ9</accession>